<sequence length="119" mass="13735">MARVSRGVQAHAKHKKILKKAKGYYGARSKVYRIAKQAIIKAGQYAYRDRRQRRRQFRRLWIVRINAEARNNGLSYSRMINGMSKAGIEIDRKVLSDIAIFDKVAFAKIVDQVKQALSV</sequence>
<keyword id="KW-1185">Reference proteome</keyword>
<keyword id="KW-0687">Ribonucleoprotein</keyword>
<keyword id="KW-0689">Ribosomal protein</keyword>
<keyword id="KW-0694">RNA-binding</keyword>
<keyword id="KW-0699">rRNA-binding</keyword>
<comment type="function">
    <text evidence="1">Binds directly to 23S ribosomal RNA and is necessary for the in vitro assembly process of the 50S ribosomal subunit. It is not involved in the protein synthesizing functions of that subunit.</text>
</comment>
<comment type="similarity">
    <text evidence="1">Belongs to the bacterial ribosomal protein bL20 family.</text>
</comment>
<organism>
    <name type="scientific">Vesicomyosocius okutanii subsp. Calyptogena okutanii (strain HA)</name>
    <dbReference type="NCBI Taxonomy" id="412965"/>
    <lineage>
        <taxon>Bacteria</taxon>
        <taxon>Pseudomonadati</taxon>
        <taxon>Pseudomonadota</taxon>
        <taxon>Gammaproteobacteria</taxon>
        <taxon>Candidatus Pseudothioglobaceae</taxon>
        <taxon>Candidatus Vesicomyosocius</taxon>
    </lineage>
</organism>
<feature type="chain" id="PRO_1000049100" description="Large ribosomal subunit protein bL20">
    <location>
        <begin position="1"/>
        <end position="119"/>
    </location>
</feature>
<name>RL20_VESOH</name>
<gene>
    <name evidence="1" type="primary">rplT</name>
    <name type="ordered locus">COSY_0592</name>
</gene>
<reference key="1">
    <citation type="journal article" date="2007" name="Curr. Biol.">
        <title>Reduced genome of the thioautotrophic intracellular symbiont in a deep-sea clam, Calyptogena okutanii.</title>
        <authorList>
            <person name="Kuwahara H."/>
            <person name="Yoshida T."/>
            <person name="Takaki Y."/>
            <person name="Shimamura S."/>
            <person name="Nishi S."/>
            <person name="Harada M."/>
            <person name="Matsuyama K."/>
            <person name="Takishita K."/>
            <person name="Kawato M."/>
            <person name="Uematsu K."/>
            <person name="Fujiwara Y."/>
            <person name="Sato T."/>
            <person name="Kato C."/>
            <person name="Kitagawa M."/>
            <person name="Kato I."/>
            <person name="Maruyama T."/>
        </authorList>
    </citation>
    <scope>NUCLEOTIDE SEQUENCE [LARGE SCALE GENOMIC DNA]</scope>
    <source>
        <strain>HA</strain>
    </source>
</reference>
<protein>
    <recommendedName>
        <fullName evidence="1">Large ribosomal subunit protein bL20</fullName>
    </recommendedName>
    <alternativeName>
        <fullName evidence="2">50S ribosomal protein L20</fullName>
    </alternativeName>
</protein>
<dbReference type="EMBL" id="AP009247">
    <property type="protein sequence ID" value="BAF61707.1"/>
    <property type="molecule type" value="Genomic_DNA"/>
</dbReference>
<dbReference type="RefSeq" id="WP_011929977.1">
    <property type="nucleotide sequence ID" value="NC_009465.1"/>
</dbReference>
<dbReference type="SMR" id="A5CWF6"/>
<dbReference type="STRING" id="412965.COSY_0592"/>
<dbReference type="KEGG" id="vok:COSY_0592"/>
<dbReference type="eggNOG" id="COG0292">
    <property type="taxonomic scope" value="Bacteria"/>
</dbReference>
<dbReference type="HOGENOM" id="CLU_123265_0_1_6"/>
<dbReference type="OrthoDB" id="9808966at2"/>
<dbReference type="Proteomes" id="UP000000247">
    <property type="component" value="Chromosome"/>
</dbReference>
<dbReference type="GO" id="GO:1990904">
    <property type="term" value="C:ribonucleoprotein complex"/>
    <property type="evidence" value="ECO:0007669"/>
    <property type="project" value="UniProtKB-KW"/>
</dbReference>
<dbReference type="GO" id="GO:0005840">
    <property type="term" value="C:ribosome"/>
    <property type="evidence" value="ECO:0007669"/>
    <property type="project" value="UniProtKB-KW"/>
</dbReference>
<dbReference type="GO" id="GO:0019843">
    <property type="term" value="F:rRNA binding"/>
    <property type="evidence" value="ECO:0007669"/>
    <property type="project" value="UniProtKB-UniRule"/>
</dbReference>
<dbReference type="GO" id="GO:0003735">
    <property type="term" value="F:structural constituent of ribosome"/>
    <property type="evidence" value="ECO:0007669"/>
    <property type="project" value="InterPro"/>
</dbReference>
<dbReference type="GO" id="GO:0000027">
    <property type="term" value="P:ribosomal large subunit assembly"/>
    <property type="evidence" value="ECO:0007669"/>
    <property type="project" value="UniProtKB-UniRule"/>
</dbReference>
<dbReference type="GO" id="GO:0006412">
    <property type="term" value="P:translation"/>
    <property type="evidence" value="ECO:0007669"/>
    <property type="project" value="InterPro"/>
</dbReference>
<dbReference type="CDD" id="cd07026">
    <property type="entry name" value="Ribosomal_L20"/>
    <property type="match status" value="1"/>
</dbReference>
<dbReference type="FunFam" id="1.10.1900.20:FF:000001">
    <property type="entry name" value="50S ribosomal protein L20"/>
    <property type="match status" value="1"/>
</dbReference>
<dbReference type="Gene3D" id="6.10.160.10">
    <property type="match status" value="1"/>
</dbReference>
<dbReference type="Gene3D" id="1.10.1900.20">
    <property type="entry name" value="Ribosomal protein L20"/>
    <property type="match status" value="1"/>
</dbReference>
<dbReference type="HAMAP" id="MF_00382">
    <property type="entry name" value="Ribosomal_bL20"/>
    <property type="match status" value="1"/>
</dbReference>
<dbReference type="InterPro" id="IPR005813">
    <property type="entry name" value="Ribosomal_bL20"/>
</dbReference>
<dbReference type="InterPro" id="IPR035566">
    <property type="entry name" value="Ribosomal_protein_bL20_C"/>
</dbReference>
<dbReference type="NCBIfam" id="TIGR01032">
    <property type="entry name" value="rplT_bact"/>
    <property type="match status" value="1"/>
</dbReference>
<dbReference type="PANTHER" id="PTHR10986">
    <property type="entry name" value="39S RIBOSOMAL PROTEIN L20"/>
    <property type="match status" value="1"/>
</dbReference>
<dbReference type="Pfam" id="PF00453">
    <property type="entry name" value="Ribosomal_L20"/>
    <property type="match status" value="1"/>
</dbReference>
<dbReference type="PRINTS" id="PR00062">
    <property type="entry name" value="RIBOSOMALL20"/>
</dbReference>
<dbReference type="SUPFAM" id="SSF74731">
    <property type="entry name" value="Ribosomal protein L20"/>
    <property type="match status" value="1"/>
</dbReference>
<proteinExistence type="inferred from homology"/>
<evidence type="ECO:0000255" key="1">
    <source>
        <dbReference type="HAMAP-Rule" id="MF_00382"/>
    </source>
</evidence>
<evidence type="ECO:0000305" key="2"/>
<accession>A5CWF6</accession>